<gene>
    <name evidence="1" type="primary">leuA</name>
</gene>
<proteinExistence type="inferred from homology"/>
<geneLocation type="plasmid">
    <name>pLeu</name>
    <name>pBAp1</name>
</geneLocation>
<protein>
    <recommendedName>
        <fullName evidence="1">2-isopropylmalate synthase</fullName>
        <ecNumber evidence="1">2.3.3.13</ecNumber>
    </recommendedName>
    <alternativeName>
        <fullName evidence="1">Alpha-IPM synthase</fullName>
    </alternativeName>
    <alternativeName>
        <fullName evidence="1">Alpha-isopropylmalate synthase</fullName>
    </alternativeName>
</protein>
<comment type="function">
    <text evidence="1">Catalyzes the condensation of the acetyl group of acetyl-CoA with 3-methyl-2-oxobutanoate (2-ketoisovalerate) to form 3-carboxy-3-hydroxy-4-methylpentanoate (2-isopropylmalate).</text>
</comment>
<comment type="catalytic activity">
    <reaction evidence="1">
        <text>3-methyl-2-oxobutanoate + acetyl-CoA + H2O = (2S)-2-isopropylmalate + CoA + H(+)</text>
        <dbReference type="Rhea" id="RHEA:21524"/>
        <dbReference type="ChEBI" id="CHEBI:1178"/>
        <dbReference type="ChEBI" id="CHEBI:11851"/>
        <dbReference type="ChEBI" id="CHEBI:15377"/>
        <dbReference type="ChEBI" id="CHEBI:15378"/>
        <dbReference type="ChEBI" id="CHEBI:57287"/>
        <dbReference type="ChEBI" id="CHEBI:57288"/>
        <dbReference type="EC" id="2.3.3.13"/>
    </reaction>
</comment>
<comment type="cofactor">
    <cofactor evidence="1">
        <name>Mn(2+)</name>
        <dbReference type="ChEBI" id="CHEBI:29035"/>
    </cofactor>
</comment>
<comment type="pathway">
    <text evidence="1">Amino-acid biosynthesis; L-leucine biosynthesis; L-leucine from 3-methyl-2-oxobutanoate: step 1/4.</text>
</comment>
<comment type="subunit">
    <text evidence="1">Homodimer.</text>
</comment>
<comment type="subcellular location">
    <subcellularLocation>
        <location evidence="1">Cytoplasm</location>
    </subcellularLocation>
</comment>
<comment type="similarity">
    <text evidence="1 2">Belongs to the alpha-IPM synthase/homocitrate synthase family. LeuA type 1 subfamily.</text>
</comment>
<name>LEU1_BUCUM</name>
<dbReference type="EC" id="2.3.3.13" evidence="1"/>
<dbReference type="EMBL" id="AF197454">
    <property type="protein sequence ID" value="AAG31395.1"/>
    <property type="molecule type" value="Genomic_DNA"/>
</dbReference>
<dbReference type="SMR" id="Q9EVH0"/>
<dbReference type="UniPathway" id="UPA00048">
    <property type="reaction ID" value="UER00070"/>
</dbReference>
<dbReference type="GO" id="GO:0005829">
    <property type="term" value="C:cytosol"/>
    <property type="evidence" value="ECO:0007669"/>
    <property type="project" value="TreeGrafter"/>
</dbReference>
<dbReference type="GO" id="GO:0003852">
    <property type="term" value="F:2-isopropylmalate synthase activity"/>
    <property type="evidence" value="ECO:0007669"/>
    <property type="project" value="UniProtKB-EC"/>
</dbReference>
<dbReference type="GO" id="GO:0046872">
    <property type="term" value="F:metal ion binding"/>
    <property type="evidence" value="ECO:0007669"/>
    <property type="project" value="UniProtKB-KW"/>
</dbReference>
<dbReference type="GO" id="GO:0009098">
    <property type="term" value="P:L-leucine biosynthetic process"/>
    <property type="evidence" value="ECO:0007669"/>
    <property type="project" value="UniProtKB-UniPathway"/>
</dbReference>
<dbReference type="CDD" id="cd07940">
    <property type="entry name" value="DRE_TIM_IPMS"/>
    <property type="match status" value="1"/>
</dbReference>
<dbReference type="FunFam" id="1.10.238.260:FF:000001">
    <property type="entry name" value="2-isopropylmalate synthase"/>
    <property type="match status" value="1"/>
</dbReference>
<dbReference type="FunFam" id="3.20.20.70:FF:000010">
    <property type="entry name" value="2-isopropylmalate synthase"/>
    <property type="match status" value="1"/>
</dbReference>
<dbReference type="FunFam" id="3.30.160.270:FF:000001">
    <property type="entry name" value="2-isopropylmalate synthase"/>
    <property type="match status" value="1"/>
</dbReference>
<dbReference type="Gene3D" id="1.10.238.260">
    <property type="match status" value="1"/>
</dbReference>
<dbReference type="Gene3D" id="3.30.160.270">
    <property type="match status" value="1"/>
</dbReference>
<dbReference type="Gene3D" id="3.20.20.70">
    <property type="entry name" value="Aldolase class I"/>
    <property type="match status" value="1"/>
</dbReference>
<dbReference type="HAMAP" id="MF_01025">
    <property type="entry name" value="LeuA_type1"/>
    <property type="match status" value="1"/>
</dbReference>
<dbReference type="InterPro" id="IPR050073">
    <property type="entry name" value="2-IPM_HCS-like"/>
</dbReference>
<dbReference type="InterPro" id="IPR013709">
    <property type="entry name" value="2-isopropylmalate_synth_dimer"/>
</dbReference>
<dbReference type="InterPro" id="IPR002034">
    <property type="entry name" value="AIPM/Hcit_synth_CS"/>
</dbReference>
<dbReference type="InterPro" id="IPR013785">
    <property type="entry name" value="Aldolase_TIM"/>
</dbReference>
<dbReference type="InterPro" id="IPR054691">
    <property type="entry name" value="LeuA/HCS_post-cat"/>
</dbReference>
<dbReference type="InterPro" id="IPR036230">
    <property type="entry name" value="LeuA_allosteric_dom_sf"/>
</dbReference>
<dbReference type="InterPro" id="IPR005671">
    <property type="entry name" value="LeuA_bact_synth"/>
</dbReference>
<dbReference type="InterPro" id="IPR000891">
    <property type="entry name" value="PYR_CT"/>
</dbReference>
<dbReference type="NCBIfam" id="TIGR00973">
    <property type="entry name" value="leuA_bact"/>
    <property type="match status" value="1"/>
</dbReference>
<dbReference type="NCBIfam" id="NF002084">
    <property type="entry name" value="PRK00915.1-1"/>
    <property type="match status" value="1"/>
</dbReference>
<dbReference type="NCBIfam" id="NF002086">
    <property type="entry name" value="PRK00915.1-3"/>
    <property type="match status" value="1"/>
</dbReference>
<dbReference type="PANTHER" id="PTHR10277:SF9">
    <property type="entry name" value="2-ISOPROPYLMALATE SYNTHASE 1, CHLOROPLASTIC-RELATED"/>
    <property type="match status" value="1"/>
</dbReference>
<dbReference type="PANTHER" id="PTHR10277">
    <property type="entry name" value="HOMOCITRATE SYNTHASE-RELATED"/>
    <property type="match status" value="1"/>
</dbReference>
<dbReference type="Pfam" id="PF22617">
    <property type="entry name" value="HCS_D2"/>
    <property type="match status" value="1"/>
</dbReference>
<dbReference type="Pfam" id="PF00682">
    <property type="entry name" value="HMGL-like"/>
    <property type="match status" value="1"/>
</dbReference>
<dbReference type="Pfam" id="PF08502">
    <property type="entry name" value="LeuA_dimer"/>
    <property type="match status" value="1"/>
</dbReference>
<dbReference type="SMART" id="SM00917">
    <property type="entry name" value="LeuA_dimer"/>
    <property type="match status" value="1"/>
</dbReference>
<dbReference type="SUPFAM" id="SSF110921">
    <property type="entry name" value="2-isopropylmalate synthase LeuA, allosteric (dimerisation) domain"/>
    <property type="match status" value="1"/>
</dbReference>
<dbReference type="SUPFAM" id="SSF51569">
    <property type="entry name" value="Aldolase"/>
    <property type="match status" value="1"/>
</dbReference>
<dbReference type="PROSITE" id="PS00816">
    <property type="entry name" value="AIPM_HOMOCIT_SYNTH_2"/>
    <property type="match status" value="1"/>
</dbReference>
<dbReference type="PROSITE" id="PS50991">
    <property type="entry name" value="PYR_CT"/>
    <property type="match status" value="1"/>
</dbReference>
<sequence>DGEQALQASLSVKEKLQIALCLEKSGVDIMEVGFPISSPGDFKSVQTISQKIKNSRVCSLARCIEKDIDVAGEAMSASNSFRIHIFLATSTLHMESKLRKNFNEIIDMAIFSVKRALRYTDDIEFSCEDASRTTIDNLCRIVEKLISCGVKTINIPDTVGYTIPNELSFIIKNLFEKVPNIHKSTISVHCHDDLGMAVGNSISAIQAGARQIEGTINGIGERAGNTALEEVIMAIKVREDILGVSTNINHKEIYRTSQIVSSICNMPIPSNKAIVGSNAFAHSSGIHQDGVLKNRENYEIIDPISIGLKKVKLNLTSRSGRAAVKHYMNEMGYKENDYNIDELYTDFLKLADKKGQVFDYDLEALAFINKQQDESEYFSLKFFSVQSISNNLSTASVTLLCGKKIYTEASTTSNGPVDAIYQALNRITHFPIVLQKFQLVAKGKGKDALGQVDILVEYKKRKFHGVGLATDIMESSAKAMVNVLNNIWKAKQVNKNLKNLKKQ</sequence>
<keyword id="KW-0028">Amino-acid biosynthesis</keyword>
<keyword id="KW-0100">Branched-chain amino acid biosynthesis</keyword>
<keyword id="KW-0963">Cytoplasm</keyword>
<keyword id="KW-0432">Leucine biosynthesis</keyword>
<keyword id="KW-0464">Manganese</keyword>
<keyword id="KW-0479">Metal-binding</keyword>
<keyword id="KW-0614">Plasmid</keyword>
<keyword id="KW-0808">Transferase</keyword>
<reference key="1">
    <citation type="journal article" date="2001" name="J. Bacteriol.">
        <title>Vertical transmission of biosynthetic plasmids in aphid endosymbionts (Buchnera).</title>
        <authorList>
            <person name="Wernegreen J.J."/>
            <person name="Moran N.A."/>
        </authorList>
    </citation>
    <scope>NUCLEOTIDE SEQUENCE [GENOMIC DNA]</scope>
</reference>
<evidence type="ECO:0000255" key="1">
    <source>
        <dbReference type="HAMAP-Rule" id="MF_01025"/>
    </source>
</evidence>
<evidence type="ECO:0000305" key="2"/>
<organism>
    <name type="scientific">Buchnera aphidicola subsp. Uroleucon ambrosiae</name>
    <dbReference type="NCBI Taxonomy" id="118117"/>
    <lineage>
        <taxon>Bacteria</taxon>
        <taxon>Pseudomonadati</taxon>
        <taxon>Pseudomonadota</taxon>
        <taxon>Gammaproteobacteria</taxon>
        <taxon>Enterobacterales</taxon>
        <taxon>Erwiniaceae</taxon>
        <taxon>Buchnera</taxon>
    </lineage>
</organism>
<accession>Q9EVH0</accession>
<feature type="chain" id="PRO_0000140344" description="2-isopropylmalate synthase">
    <location>
        <begin position="1" status="less than"/>
        <end position="503"/>
    </location>
</feature>
<feature type="domain" description="Pyruvate carboxyltransferase" evidence="1">
    <location>
        <begin position="1"/>
        <end position="254"/>
    </location>
</feature>
<feature type="region of interest" description="Regulatory domain" evidence="1">
    <location>
        <begin position="379"/>
        <end position="503"/>
    </location>
</feature>
<feature type="binding site" evidence="1">
    <location>
        <position position="1"/>
    </location>
    <ligand>
        <name>Mn(2+)</name>
        <dbReference type="ChEBI" id="CHEBI:29035"/>
    </ligand>
</feature>
<feature type="binding site" evidence="1">
    <location>
        <position position="189"/>
    </location>
    <ligand>
        <name>Mn(2+)</name>
        <dbReference type="ChEBI" id="CHEBI:29035"/>
    </ligand>
</feature>
<feature type="binding site" evidence="1">
    <location>
        <position position="191"/>
    </location>
    <ligand>
        <name>Mn(2+)</name>
        <dbReference type="ChEBI" id="CHEBI:29035"/>
    </ligand>
</feature>
<feature type="binding site" evidence="1">
    <location>
        <position position="225"/>
    </location>
    <ligand>
        <name>Mn(2+)</name>
        <dbReference type="ChEBI" id="CHEBI:29035"/>
    </ligand>
</feature>
<feature type="non-terminal residue">
    <location>
        <position position="1"/>
    </location>
</feature>